<protein>
    <recommendedName>
        <fullName evidence="1">Enolase</fullName>
        <ecNumber evidence="1">4.2.1.11</ecNumber>
    </recommendedName>
    <alternativeName>
        <fullName evidence="1">2-phospho-D-glycerate hydro-lyase</fullName>
    </alternativeName>
    <alternativeName>
        <fullName evidence="1">2-phosphoglycerate dehydratase</fullName>
    </alternativeName>
</protein>
<evidence type="ECO:0000255" key="1">
    <source>
        <dbReference type="HAMAP-Rule" id="MF_00318"/>
    </source>
</evidence>
<organism>
    <name type="scientific">Salmonella paratyphi B (strain ATCC BAA-1250 / SPB7)</name>
    <dbReference type="NCBI Taxonomy" id="1016998"/>
    <lineage>
        <taxon>Bacteria</taxon>
        <taxon>Pseudomonadati</taxon>
        <taxon>Pseudomonadota</taxon>
        <taxon>Gammaproteobacteria</taxon>
        <taxon>Enterobacterales</taxon>
        <taxon>Enterobacteriaceae</taxon>
        <taxon>Salmonella</taxon>
    </lineage>
</organism>
<keyword id="KW-0963">Cytoplasm</keyword>
<keyword id="KW-0324">Glycolysis</keyword>
<keyword id="KW-0456">Lyase</keyword>
<keyword id="KW-0460">Magnesium</keyword>
<keyword id="KW-0479">Metal-binding</keyword>
<keyword id="KW-0964">Secreted</keyword>
<gene>
    <name evidence="1" type="primary">eno</name>
    <name type="ordered locus">SPAB_03665</name>
</gene>
<feature type="chain" id="PRO_1000079148" description="Enolase">
    <location>
        <begin position="1"/>
        <end position="432"/>
    </location>
</feature>
<feature type="active site" description="Proton donor" evidence="1">
    <location>
        <position position="209"/>
    </location>
</feature>
<feature type="active site" description="Proton acceptor" evidence="1">
    <location>
        <position position="342"/>
    </location>
</feature>
<feature type="binding site" evidence="1">
    <location>
        <position position="167"/>
    </location>
    <ligand>
        <name>(2R)-2-phosphoglycerate</name>
        <dbReference type="ChEBI" id="CHEBI:58289"/>
    </ligand>
</feature>
<feature type="binding site" evidence="1">
    <location>
        <position position="246"/>
    </location>
    <ligand>
        <name>Mg(2+)</name>
        <dbReference type="ChEBI" id="CHEBI:18420"/>
    </ligand>
</feature>
<feature type="binding site" evidence="1">
    <location>
        <position position="290"/>
    </location>
    <ligand>
        <name>Mg(2+)</name>
        <dbReference type="ChEBI" id="CHEBI:18420"/>
    </ligand>
</feature>
<feature type="binding site" evidence="1">
    <location>
        <position position="317"/>
    </location>
    <ligand>
        <name>Mg(2+)</name>
        <dbReference type="ChEBI" id="CHEBI:18420"/>
    </ligand>
</feature>
<feature type="binding site" evidence="1">
    <location>
        <position position="342"/>
    </location>
    <ligand>
        <name>(2R)-2-phosphoglycerate</name>
        <dbReference type="ChEBI" id="CHEBI:58289"/>
    </ligand>
</feature>
<feature type="binding site" evidence="1">
    <location>
        <position position="371"/>
    </location>
    <ligand>
        <name>(2R)-2-phosphoglycerate</name>
        <dbReference type="ChEBI" id="CHEBI:58289"/>
    </ligand>
</feature>
<feature type="binding site" evidence="1">
    <location>
        <position position="372"/>
    </location>
    <ligand>
        <name>(2R)-2-phosphoglycerate</name>
        <dbReference type="ChEBI" id="CHEBI:58289"/>
    </ligand>
</feature>
<feature type="binding site" evidence="1">
    <location>
        <position position="393"/>
    </location>
    <ligand>
        <name>(2R)-2-phosphoglycerate</name>
        <dbReference type="ChEBI" id="CHEBI:58289"/>
    </ligand>
</feature>
<name>ENO_SALPB</name>
<comment type="function">
    <text evidence="1">Catalyzes the reversible conversion of 2-phosphoglycerate (2-PG) into phosphoenolpyruvate (PEP). It is essential for the degradation of carbohydrates via glycolysis.</text>
</comment>
<comment type="catalytic activity">
    <reaction evidence="1">
        <text>(2R)-2-phosphoglycerate = phosphoenolpyruvate + H2O</text>
        <dbReference type="Rhea" id="RHEA:10164"/>
        <dbReference type="ChEBI" id="CHEBI:15377"/>
        <dbReference type="ChEBI" id="CHEBI:58289"/>
        <dbReference type="ChEBI" id="CHEBI:58702"/>
        <dbReference type="EC" id="4.2.1.11"/>
    </reaction>
</comment>
<comment type="cofactor">
    <cofactor evidence="1">
        <name>Mg(2+)</name>
        <dbReference type="ChEBI" id="CHEBI:18420"/>
    </cofactor>
    <text evidence="1">Binds a second Mg(2+) ion via substrate during catalysis.</text>
</comment>
<comment type="pathway">
    <text evidence="1">Carbohydrate degradation; glycolysis; pyruvate from D-glyceraldehyde 3-phosphate: step 4/5.</text>
</comment>
<comment type="subunit">
    <text evidence="1">Component of the RNA degradosome, a multiprotein complex involved in RNA processing and mRNA degradation.</text>
</comment>
<comment type="subcellular location">
    <subcellularLocation>
        <location evidence="1">Cytoplasm</location>
    </subcellularLocation>
    <subcellularLocation>
        <location evidence="1">Secreted</location>
    </subcellularLocation>
    <subcellularLocation>
        <location evidence="1">Cell surface</location>
    </subcellularLocation>
    <text evidence="1">Fractions of enolase are present in both the cytoplasm and on the cell surface.</text>
</comment>
<comment type="similarity">
    <text evidence="1">Belongs to the enolase family.</text>
</comment>
<sequence length="432" mass="45599">MSKIVKVIGREIIDSRGNPTVEAEVHLEGGFVGMAAAPSGASTGSREALELRDGDKSRFLGKGVTKAVGAVNGPIAQAILGKDAKDQAGIDKIMIDLDGTENKSNFGANAILAVSLANAKAAAAAKGMPLYEHIAELNGTPGKYSMPVPMMNIINGGEHADNNVDIQEFMIQPVGAKTVKEAIRMGSEVFHHLAKVLKGKGMNTAVGDEGGYAPNLGSNAEALAVIAEAVKAAGYELGKDITLAMDCAASEFYKDGKYVLAGEGNKAFTSEEFTHFLEELTKQYPIVSIEDGLDESDWDGFAYQTKVLGDKIQLVGDDLFVTNTKILKEGIEKGIANSILIKFNQIGSLTETLAAIKMAKDAGYTAVISHRSGETEDATIADLAVGTAAGQIKTGSMSRSDRVAKYNQLIRIEEALGEKAPYNGRKEIKGQA</sequence>
<reference key="1">
    <citation type="submission" date="2007-11" db="EMBL/GenBank/DDBJ databases">
        <authorList>
            <consortium name="The Salmonella enterica serovar Paratyphi B Genome Sequencing Project"/>
            <person name="McClelland M."/>
            <person name="Sanderson E.K."/>
            <person name="Porwollik S."/>
            <person name="Spieth J."/>
            <person name="Clifton W.S."/>
            <person name="Fulton R."/>
            <person name="Cordes M."/>
            <person name="Wollam A."/>
            <person name="Shah N."/>
            <person name="Pepin K."/>
            <person name="Bhonagiri V."/>
            <person name="Nash W."/>
            <person name="Johnson M."/>
            <person name="Thiruvilangam P."/>
            <person name="Wilson R."/>
        </authorList>
    </citation>
    <scope>NUCLEOTIDE SEQUENCE [LARGE SCALE GENOMIC DNA]</scope>
    <source>
        <strain>ATCC BAA-1250 / SPB7</strain>
    </source>
</reference>
<dbReference type="EC" id="4.2.1.11" evidence="1"/>
<dbReference type="EMBL" id="CP000886">
    <property type="protein sequence ID" value="ABX69005.1"/>
    <property type="molecule type" value="Genomic_DNA"/>
</dbReference>
<dbReference type="RefSeq" id="WP_000036734.1">
    <property type="nucleotide sequence ID" value="NC_010102.1"/>
</dbReference>
<dbReference type="SMR" id="A9N2F4"/>
<dbReference type="GeneID" id="66757270"/>
<dbReference type="KEGG" id="spq:SPAB_03665"/>
<dbReference type="PATRIC" id="fig|1016998.12.peg.3452"/>
<dbReference type="HOGENOM" id="CLU_031223_2_1_6"/>
<dbReference type="BioCyc" id="SENT1016998:SPAB_RS14925-MONOMER"/>
<dbReference type="UniPathway" id="UPA00109">
    <property type="reaction ID" value="UER00187"/>
</dbReference>
<dbReference type="Proteomes" id="UP000008556">
    <property type="component" value="Chromosome"/>
</dbReference>
<dbReference type="GO" id="GO:0009986">
    <property type="term" value="C:cell surface"/>
    <property type="evidence" value="ECO:0007669"/>
    <property type="project" value="UniProtKB-SubCell"/>
</dbReference>
<dbReference type="GO" id="GO:0005576">
    <property type="term" value="C:extracellular region"/>
    <property type="evidence" value="ECO:0007669"/>
    <property type="project" value="UniProtKB-SubCell"/>
</dbReference>
<dbReference type="GO" id="GO:0000015">
    <property type="term" value="C:phosphopyruvate hydratase complex"/>
    <property type="evidence" value="ECO:0007669"/>
    <property type="project" value="InterPro"/>
</dbReference>
<dbReference type="GO" id="GO:0000287">
    <property type="term" value="F:magnesium ion binding"/>
    <property type="evidence" value="ECO:0007669"/>
    <property type="project" value="UniProtKB-UniRule"/>
</dbReference>
<dbReference type="GO" id="GO:0004634">
    <property type="term" value="F:phosphopyruvate hydratase activity"/>
    <property type="evidence" value="ECO:0007669"/>
    <property type="project" value="UniProtKB-UniRule"/>
</dbReference>
<dbReference type="GO" id="GO:0006096">
    <property type="term" value="P:glycolytic process"/>
    <property type="evidence" value="ECO:0007669"/>
    <property type="project" value="UniProtKB-UniRule"/>
</dbReference>
<dbReference type="CDD" id="cd03313">
    <property type="entry name" value="enolase"/>
    <property type="match status" value="1"/>
</dbReference>
<dbReference type="FunFam" id="3.20.20.120:FF:000001">
    <property type="entry name" value="Enolase"/>
    <property type="match status" value="1"/>
</dbReference>
<dbReference type="FunFam" id="3.30.390.10:FF:000001">
    <property type="entry name" value="Enolase"/>
    <property type="match status" value="1"/>
</dbReference>
<dbReference type="Gene3D" id="3.20.20.120">
    <property type="entry name" value="Enolase-like C-terminal domain"/>
    <property type="match status" value="1"/>
</dbReference>
<dbReference type="Gene3D" id="3.30.390.10">
    <property type="entry name" value="Enolase-like, N-terminal domain"/>
    <property type="match status" value="1"/>
</dbReference>
<dbReference type="HAMAP" id="MF_00318">
    <property type="entry name" value="Enolase"/>
    <property type="match status" value="1"/>
</dbReference>
<dbReference type="InterPro" id="IPR000941">
    <property type="entry name" value="Enolase"/>
</dbReference>
<dbReference type="InterPro" id="IPR036849">
    <property type="entry name" value="Enolase-like_C_sf"/>
</dbReference>
<dbReference type="InterPro" id="IPR029017">
    <property type="entry name" value="Enolase-like_N"/>
</dbReference>
<dbReference type="InterPro" id="IPR020810">
    <property type="entry name" value="Enolase_C"/>
</dbReference>
<dbReference type="InterPro" id="IPR020809">
    <property type="entry name" value="Enolase_CS"/>
</dbReference>
<dbReference type="InterPro" id="IPR020811">
    <property type="entry name" value="Enolase_N"/>
</dbReference>
<dbReference type="NCBIfam" id="TIGR01060">
    <property type="entry name" value="eno"/>
    <property type="match status" value="1"/>
</dbReference>
<dbReference type="PANTHER" id="PTHR11902">
    <property type="entry name" value="ENOLASE"/>
    <property type="match status" value="1"/>
</dbReference>
<dbReference type="PANTHER" id="PTHR11902:SF1">
    <property type="entry name" value="ENOLASE"/>
    <property type="match status" value="1"/>
</dbReference>
<dbReference type="Pfam" id="PF00113">
    <property type="entry name" value="Enolase_C"/>
    <property type="match status" value="1"/>
</dbReference>
<dbReference type="Pfam" id="PF03952">
    <property type="entry name" value="Enolase_N"/>
    <property type="match status" value="1"/>
</dbReference>
<dbReference type="PIRSF" id="PIRSF001400">
    <property type="entry name" value="Enolase"/>
    <property type="match status" value="1"/>
</dbReference>
<dbReference type="PRINTS" id="PR00148">
    <property type="entry name" value="ENOLASE"/>
</dbReference>
<dbReference type="SFLD" id="SFLDF00002">
    <property type="entry name" value="enolase"/>
    <property type="match status" value="1"/>
</dbReference>
<dbReference type="SFLD" id="SFLDG00178">
    <property type="entry name" value="enolase"/>
    <property type="match status" value="1"/>
</dbReference>
<dbReference type="SMART" id="SM01192">
    <property type="entry name" value="Enolase_C"/>
    <property type="match status" value="1"/>
</dbReference>
<dbReference type="SMART" id="SM01193">
    <property type="entry name" value="Enolase_N"/>
    <property type="match status" value="1"/>
</dbReference>
<dbReference type="SUPFAM" id="SSF51604">
    <property type="entry name" value="Enolase C-terminal domain-like"/>
    <property type="match status" value="1"/>
</dbReference>
<dbReference type="SUPFAM" id="SSF54826">
    <property type="entry name" value="Enolase N-terminal domain-like"/>
    <property type="match status" value="1"/>
</dbReference>
<dbReference type="PROSITE" id="PS00164">
    <property type="entry name" value="ENOLASE"/>
    <property type="match status" value="1"/>
</dbReference>
<proteinExistence type="inferred from homology"/>
<accession>A9N2F4</accession>